<sequence>MGIGACALARSPVKIKTFGLGSCVVITLYDRQERIGGLVHTMLPSISDARIKDKPFKYTDSGIEHLATEILREGSPRKRFEAKLVGGAHMFENRNLNIGERNIKYAKNTLEKFEIPIISEDTGKNYGRTITLDTSTGDLLIRTILRADKII</sequence>
<comment type="function">
    <text evidence="1">Probably deamidates glutamine residues to glutamate on methyl-accepting chemotaxis receptors (MCPs), playing an important role in chemotaxis.</text>
</comment>
<comment type="catalytic activity">
    <reaction evidence="1">
        <text>L-glutaminyl-[protein] + H2O = L-glutamyl-[protein] + NH4(+)</text>
        <dbReference type="Rhea" id="RHEA:16441"/>
        <dbReference type="Rhea" id="RHEA-COMP:10207"/>
        <dbReference type="Rhea" id="RHEA-COMP:10208"/>
        <dbReference type="ChEBI" id="CHEBI:15377"/>
        <dbReference type="ChEBI" id="CHEBI:28938"/>
        <dbReference type="ChEBI" id="CHEBI:29973"/>
        <dbReference type="ChEBI" id="CHEBI:30011"/>
        <dbReference type="EC" id="3.5.1.44"/>
    </reaction>
</comment>
<comment type="similarity">
    <text evidence="1">Belongs to the CheD family.</text>
</comment>
<organism>
    <name type="scientific">Methanosarcina barkeri (strain Fusaro / DSM 804)</name>
    <dbReference type="NCBI Taxonomy" id="269797"/>
    <lineage>
        <taxon>Archaea</taxon>
        <taxon>Methanobacteriati</taxon>
        <taxon>Methanobacteriota</taxon>
        <taxon>Stenosarchaea group</taxon>
        <taxon>Methanomicrobia</taxon>
        <taxon>Methanosarcinales</taxon>
        <taxon>Methanosarcinaceae</taxon>
        <taxon>Methanosarcina</taxon>
    </lineage>
</organism>
<keyword id="KW-0145">Chemotaxis</keyword>
<keyword id="KW-0378">Hydrolase</keyword>
<accession>Q46DT9</accession>
<dbReference type="EC" id="3.5.1.44" evidence="1"/>
<dbReference type="EMBL" id="CP000099">
    <property type="protein sequence ID" value="AAZ69953.1"/>
    <property type="molecule type" value="Genomic_DNA"/>
</dbReference>
<dbReference type="SMR" id="Q46DT9"/>
<dbReference type="STRING" id="269797.Mbar_A0982"/>
<dbReference type="PaxDb" id="269797-Mbar_A0982"/>
<dbReference type="KEGG" id="mba:Mbar_A0982"/>
<dbReference type="eggNOG" id="arCOG02380">
    <property type="taxonomic scope" value="Archaea"/>
</dbReference>
<dbReference type="HOGENOM" id="CLU_087854_2_0_2"/>
<dbReference type="GO" id="GO:0050568">
    <property type="term" value="F:protein-glutamine glutaminase activity"/>
    <property type="evidence" value="ECO:0007669"/>
    <property type="project" value="UniProtKB-UniRule"/>
</dbReference>
<dbReference type="GO" id="GO:0006935">
    <property type="term" value="P:chemotaxis"/>
    <property type="evidence" value="ECO:0007669"/>
    <property type="project" value="UniProtKB-UniRule"/>
</dbReference>
<dbReference type="CDD" id="cd16352">
    <property type="entry name" value="CheD"/>
    <property type="match status" value="1"/>
</dbReference>
<dbReference type="Gene3D" id="3.30.1330.200">
    <property type="match status" value="1"/>
</dbReference>
<dbReference type="HAMAP" id="MF_01440">
    <property type="entry name" value="CheD"/>
    <property type="match status" value="1"/>
</dbReference>
<dbReference type="InterPro" id="IPR038592">
    <property type="entry name" value="CheD-like_sf"/>
</dbReference>
<dbReference type="InterPro" id="IPR005659">
    <property type="entry name" value="Chemorcpt_Glu_NH3ase_CheD"/>
</dbReference>
<dbReference type="InterPro" id="IPR011324">
    <property type="entry name" value="Cytotoxic_necrot_fac-like_cat"/>
</dbReference>
<dbReference type="PANTHER" id="PTHR35147">
    <property type="entry name" value="CHEMORECEPTOR GLUTAMINE DEAMIDASE CHED-RELATED"/>
    <property type="match status" value="1"/>
</dbReference>
<dbReference type="PANTHER" id="PTHR35147:SF1">
    <property type="entry name" value="CHEMORECEPTOR GLUTAMINE DEAMIDASE CHED-RELATED"/>
    <property type="match status" value="1"/>
</dbReference>
<dbReference type="Pfam" id="PF03975">
    <property type="entry name" value="CheD"/>
    <property type="match status" value="1"/>
</dbReference>
<dbReference type="SUPFAM" id="SSF64438">
    <property type="entry name" value="CNF1/YfiH-like putative cysteine hydrolases"/>
    <property type="match status" value="1"/>
</dbReference>
<name>CHED_METBF</name>
<proteinExistence type="inferred from homology"/>
<gene>
    <name evidence="1" type="primary">cheD</name>
    <name type="ordered locus">Mbar_A0982</name>
</gene>
<feature type="chain" id="PRO_0000251091" description="Probable chemoreceptor glutamine deamidase CheD">
    <location>
        <begin position="1"/>
        <end position="151"/>
    </location>
</feature>
<protein>
    <recommendedName>
        <fullName evidence="1">Probable chemoreceptor glutamine deamidase CheD</fullName>
        <ecNumber evidence="1">3.5.1.44</ecNumber>
    </recommendedName>
</protein>
<evidence type="ECO:0000255" key="1">
    <source>
        <dbReference type="HAMAP-Rule" id="MF_01440"/>
    </source>
</evidence>
<reference key="1">
    <citation type="journal article" date="2006" name="J. Bacteriol.">
        <title>The Methanosarcina barkeri genome: comparative analysis with Methanosarcina acetivorans and Methanosarcina mazei reveals extensive rearrangement within methanosarcinal genomes.</title>
        <authorList>
            <person name="Maeder D.L."/>
            <person name="Anderson I."/>
            <person name="Brettin T.S."/>
            <person name="Bruce D.C."/>
            <person name="Gilna P."/>
            <person name="Han C.S."/>
            <person name="Lapidus A."/>
            <person name="Metcalf W.W."/>
            <person name="Saunders E."/>
            <person name="Tapia R."/>
            <person name="Sowers K.R."/>
        </authorList>
    </citation>
    <scope>NUCLEOTIDE SEQUENCE [LARGE SCALE GENOMIC DNA]</scope>
    <source>
        <strain>Fusaro / DSM 804</strain>
    </source>
</reference>